<dbReference type="EMBL" id="AP009240">
    <property type="protein sequence ID" value="BAG75988.1"/>
    <property type="molecule type" value="Genomic_DNA"/>
</dbReference>
<dbReference type="RefSeq" id="WP_000130305.1">
    <property type="nucleotide sequence ID" value="NC_011415.1"/>
</dbReference>
<dbReference type="SMR" id="B6HZP5"/>
<dbReference type="GeneID" id="93777016"/>
<dbReference type="KEGG" id="ecy:ECSE_0464"/>
<dbReference type="HOGENOM" id="CLU_014218_8_2_6"/>
<dbReference type="Proteomes" id="UP000008199">
    <property type="component" value="Chromosome"/>
</dbReference>
<dbReference type="GO" id="GO:0009376">
    <property type="term" value="C:HslUV protease complex"/>
    <property type="evidence" value="ECO:0007669"/>
    <property type="project" value="TreeGrafter"/>
</dbReference>
<dbReference type="GO" id="GO:0005524">
    <property type="term" value="F:ATP binding"/>
    <property type="evidence" value="ECO:0007669"/>
    <property type="project" value="UniProtKB-UniRule"/>
</dbReference>
<dbReference type="GO" id="GO:0016887">
    <property type="term" value="F:ATP hydrolysis activity"/>
    <property type="evidence" value="ECO:0007669"/>
    <property type="project" value="InterPro"/>
</dbReference>
<dbReference type="GO" id="GO:0140662">
    <property type="term" value="F:ATP-dependent protein folding chaperone"/>
    <property type="evidence" value="ECO:0007669"/>
    <property type="project" value="InterPro"/>
</dbReference>
<dbReference type="GO" id="GO:0046983">
    <property type="term" value="F:protein dimerization activity"/>
    <property type="evidence" value="ECO:0007669"/>
    <property type="project" value="InterPro"/>
</dbReference>
<dbReference type="GO" id="GO:0051082">
    <property type="term" value="F:unfolded protein binding"/>
    <property type="evidence" value="ECO:0007669"/>
    <property type="project" value="UniProtKB-UniRule"/>
</dbReference>
<dbReference type="GO" id="GO:0008270">
    <property type="term" value="F:zinc ion binding"/>
    <property type="evidence" value="ECO:0007669"/>
    <property type="project" value="InterPro"/>
</dbReference>
<dbReference type="GO" id="GO:0051301">
    <property type="term" value="P:cell division"/>
    <property type="evidence" value="ECO:0007669"/>
    <property type="project" value="TreeGrafter"/>
</dbReference>
<dbReference type="GO" id="GO:0051603">
    <property type="term" value="P:proteolysis involved in protein catabolic process"/>
    <property type="evidence" value="ECO:0007669"/>
    <property type="project" value="TreeGrafter"/>
</dbReference>
<dbReference type="CDD" id="cd19497">
    <property type="entry name" value="RecA-like_ClpX"/>
    <property type="match status" value="1"/>
</dbReference>
<dbReference type="FunFam" id="1.10.8.60:FF:000002">
    <property type="entry name" value="ATP-dependent Clp protease ATP-binding subunit ClpX"/>
    <property type="match status" value="1"/>
</dbReference>
<dbReference type="FunFam" id="3.40.50.300:FF:000005">
    <property type="entry name" value="ATP-dependent Clp protease ATP-binding subunit ClpX"/>
    <property type="match status" value="1"/>
</dbReference>
<dbReference type="Gene3D" id="1.10.8.60">
    <property type="match status" value="1"/>
</dbReference>
<dbReference type="Gene3D" id="6.20.220.10">
    <property type="entry name" value="ClpX chaperone, C4-type zinc finger domain"/>
    <property type="match status" value="1"/>
</dbReference>
<dbReference type="Gene3D" id="3.40.50.300">
    <property type="entry name" value="P-loop containing nucleotide triphosphate hydrolases"/>
    <property type="match status" value="1"/>
</dbReference>
<dbReference type="HAMAP" id="MF_00175">
    <property type="entry name" value="ClpX"/>
    <property type="match status" value="1"/>
</dbReference>
<dbReference type="InterPro" id="IPR003593">
    <property type="entry name" value="AAA+_ATPase"/>
</dbReference>
<dbReference type="InterPro" id="IPR050052">
    <property type="entry name" value="ATP-dep_Clp_protease_ClpX"/>
</dbReference>
<dbReference type="InterPro" id="IPR003959">
    <property type="entry name" value="ATPase_AAA_core"/>
</dbReference>
<dbReference type="InterPro" id="IPR019489">
    <property type="entry name" value="Clp_ATPase_C"/>
</dbReference>
<dbReference type="InterPro" id="IPR004487">
    <property type="entry name" value="Clp_protease_ATP-bd_su_ClpX"/>
</dbReference>
<dbReference type="InterPro" id="IPR046425">
    <property type="entry name" value="ClpX_bact"/>
</dbReference>
<dbReference type="InterPro" id="IPR027417">
    <property type="entry name" value="P-loop_NTPase"/>
</dbReference>
<dbReference type="InterPro" id="IPR010603">
    <property type="entry name" value="Znf_CppX_C4"/>
</dbReference>
<dbReference type="InterPro" id="IPR038366">
    <property type="entry name" value="Znf_CppX_C4_sf"/>
</dbReference>
<dbReference type="NCBIfam" id="TIGR00382">
    <property type="entry name" value="clpX"/>
    <property type="match status" value="1"/>
</dbReference>
<dbReference type="NCBIfam" id="NF003745">
    <property type="entry name" value="PRK05342.1"/>
    <property type="match status" value="1"/>
</dbReference>
<dbReference type="PANTHER" id="PTHR48102:SF7">
    <property type="entry name" value="ATP-DEPENDENT CLP PROTEASE ATP-BINDING SUBUNIT CLPX-LIKE, MITOCHONDRIAL"/>
    <property type="match status" value="1"/>
</dbReference>
<dbReference type="PANTHER" id="PTHR48102">
    <property type="entry name" value="ATP-DEPENDENT CLP PROTEASE ATP-BINDING SUBUNIT CLPX-LIKE, MITOCHONDRIAL-RELATED"/>
    <property type="match status" value="1"/>
</dbReference>
<dbReference type="Pfam" id="PF07724">
    <property type="entry name" value="AAA_2"/>
    <property type="match status" value="1"/>
</dbReference>
<dbReference type="Pfam" id="PF10431">
    <property type="entry name" value="ClpB_D2-small"/>
    <property type="match status" value="1"/>
</dbReference>
<dbReference type="Pfam" id="PF06689">
    <property type="entry name" value="zf-C4_ClpX"/>
    <property type="match status" value="1"/>
</dbReference>
<dbReference type="SMART" id="SM00382">
    <property type="entry name" value="AAA"/>
    <property type="match status" value="1"/>
</dbReference>
<dbReference type="SMART" id="SM01086">
    <property type="entry name" value="ClpB_D2-small"/>
    <property type="match status" value="1"/>
</dbReference>
<dbReference type="SMART" id="SM00994">
    <property type="entry name" value="zf-C4_ClpX"/>
    <property type="match status" value="1"/>
</dbReference>
<dbReference type="SUPFAM" id="SSF57716">
    <property type="entry name" value="Glucocorticoid receptor-like (DNA-binding domain)"/>
    <property type="match status" value="1"/>
</dbReference>
<dbReference type="SUPFAM" id="SSF52540">
    <property type="entry name" value="P-loop containing nucleoside triphosphate hydrolases"/>
    <property type="match status" value="1"/>
</dbReference>
<dbReference type="PROSITE" id="PS51902">
    <property type="entry name" value="CLPX_ZB"/>
    <property type="match status" value="1"/>
</dbReference>
<name>CLPX_ECOSE</name>
<gene>
    <name evidence="1" type="primary">clpX</name>
    <name type="ordered locus">ECSE_0464</name>
</gene>
<sequence length="424" mass="46356">MTDKRKDGSGKLLYCSFCGKSQHEVRKLIAGPSVYICDECVDLCNDIIREEIKEVAPHRERSALPTPHEIRNHLDDYVIGQEQAKKVLAVAVYNHYKRLRNGDTSNGVELGKSNILLIGPTGSGKTLLAETLARLLDVPFTMADATTLTEAGYVGEDVENIIQKLLQKCDYDVQKAQRGIVYIDEIDKISRKSDNPSITRDVSGEGVQQALLKLIEGTVAAVPPQGGRKHPQQEFLQVDTSKILFICGGAFAGLDKVISHRVETGSGIGFGATVKAKSDKASEGELLAQVEPEDLIKFGLIPEFIGRLPVVATLNELSEEALIQILKEPKNALTKQYQALFNLEGVDLEFRDEALDAIAKKAMARKTGARGLRSIVEAALLDTMYDLPSMEDVEKVVIDESVIDGQSKPLLIYGKPEAQQASGE</sequence>
<protein>
    <recommendedName>
        <fullName evidence="1">ATP-dependent Clp protease ATP-binding subunit ClpX</fullName>
    </recommendedName>
</protein>
<reference key="1">
    <citation type="journal article" date="2008" name="DNA Res.">
        <title>Complete genome sequence and comparative analysis of the wild-type commensal Escherichia coli strain SE11 isolated from a healthy adult.</title>
        <authorList>
            <person name="Oshima K."/>
            <person name="Toh H."/>
            <person name="Ogura Y."/>
            <person name="Sasamoto H."/>
            <person name="Morita H."/>
            <person name="Park S.-H."/>
            <person name="Ooka T."/>
            <person name="Iyoda S."/>
            <person name="Taylor T.D."/>
            <person name="Hayashi T."/>
            <person name="Itoh K."/>
            <person name="Hattori M."/>
        </authorList>
    </citation>
    <scope>NUCLEOTIDE SEQUENCE [LARGE SCALE GENOMIC DNA]</scope>
    <source>
        <strain>SE11</strain>
    </source>
</reference>
<feature type="chain" id="PRO_1000097953" description="ATP-dependent Clp protease ATP-binding subunit ClpX">
    <location>
        <begin position="1"/>
        <end position="424"/>
    </location>
</feature>
<feature type="domain" description="ClpX-type ZB" evidence="2">
    <location>
        <begin position="2"/>
        <end position="56"/>
    </location>
</feature>
<feature type="binding site" evidence="2">
    <location>
        <position position="15"/>
    </location>
    <ligand>
        <name>Zn(2+)</name>
        <dbReference type="ChEBI" id="CHEBI:29105"/>
    </ligand>
</feature>
<feature type="binding site" evidence="2">
    <location>
        <position position="18"/>
    </location>
    <ligand>
        <name>Zn(2+)</name>
        <dbReference type="ChEBI" id="CHEBI:29105"/>
    </ligand>
</feature>
<feature type="binding site" evidence="2">
    <location>
        <position position="37"/>
    </location>
    <ligand>
        <name>Zn(2+)</name>
        <dbReference type="ChEBI" id="CHEBI:29105"/>
    </ligand>
</feature>
<feature type="binding site" evidence="2">
    <location>
        <position position="40"/>
    </location>
    <ligand>
        <name>Zn(2+)</name>
        <dbReference type="ChEBI" id="CHEBI:29105"/>
    </ligand>
</feature>
<feature type="binding site" evidence="1">
    <location>
        <begin position="120"/>
        <end position="127"/>
    </location>
    <ligand>
        <name>ATP</name>
        <dbReference type="ChEBI" id="CHEBI:30616"/>
    </ligand>
</feature>
<accession>B6HZP5</accession>
<evidence type="ECO:0000255" key="1">
    <source>
        <dbReference type="HAMAP-Rule" id="MF_00175"/>
    </source>
</evidence>
<evidence type="ECO:0000255" key="2">
    <source>
        <dbReference type="PROSITE-ProRule" id="PRU01250"/>
    </source>
</evidence>
<proteinExistence type="inferred from homology"/>
<keyword id="KW-0067">ATP-binding</keyword>
<keyword id="KW-0143">Chaperone</keyword>
<keyword id="KW-0479">Metal-binding</keyword>
<keyword id="KW-0547">Nucleotide-binding</keyword>
<keyword id="KW-0862">Zinc</keyword>
<organism>
    <name type="scientific">Escherichia coli (strain SE11)</name>
    <dbReference type="NCBI Taxonomy" id="409438"/>
    <lineage>
        <taxon>Bacteria</taxon>
        <taxon>Pseudomonadati</taxon>
        <taxon>Pseudomonadota</taxon>
        <taxon>Gammaproteobacteria</taxon>
        <taxon>Enterobacterales</taxon>
        <taxon>Enterobacteriaceae</taxon>
        <taxon>Escherichia</taxon>
    </lineage>
</organism>
<comment type="function">
    <text evidence="1">ATP-dependent specificity component of the Clp protease. It directs the protease to specific substrates. Can perform chaperone functions in the absence of ClpP.</text>
</comment>
<comment type="subunit">
    <text evidence="1">Component of the ClpX-ClpP complex. Forms a hexameric ring that, in the presence of ATP, binds to fourteen ClpP subunits assembled into a disk-like structure with a central cavity, resembling the structure of eukaryotic proteasomes.</text>
</comment>
<comment type="similarity">
    <text evidence="1">Belongs to the ClpX chaperone family.</text>
</comment>